<protein>
    <recommendedName>
        <fullName evidence="1">Probable allantoicase</fullName>
        <ecNumber evidence="1">3.5.3.4</ecNumber>
    </recommendedName>
    <alternativeName>
        <fullName evidence="1">Allantoate amidinohydrolase</fullName>
    </alternativeName>
</protein>
<feature type="chain" id="PRO_1000062285" description="Probable allantoicase">
    <location>
        <begin position="1"/>
        <end position="331"/>
    </location>
</feature>
<accession>Q3KFK9</accession>
<dbReference type="EC" id="3.5.3.4" evidence="1"/>
<dbReference type="EMBL" id="CP000094">
    <property type="protein sequence ID" value="ABA73447.1"/>
    <property type="molecule type" value="Genomic_DNA"/>
</dbReference>
<dbReference type="RefSeq" id="WP_011333191.1">
    <property type="nucleotide sequence ID" value="NC_007492.2"/>
</dbReference>
<dbReference type="SMR" id="Q3KFK9"/>
<dbReference type="KEGG" id="pfo:Pfl01_1704"/>
<dbReference type="eggNOG" id="COG4266">
    <property type="taxonomic scope" value="Bacteria"/>
</dbReference>
<dbReference type="HOGENOM" id="CLU_038797_1_2_6"/>
<dbReference type="UniPathway" id="UPA00395">
    <property type="reaction ID" value="UER00654"/>
</dbReference>
<dbReference type="Proteomes" id="UP000002704">
    <property type="component" value="Chromosome"/>
</dbReference>
<dbReference type="GO" id="GO:0004037">
    <property type="term" value="F:allantoicase activity"/>
    <property type="evidence" value="ECO:0007669"/>
    <property type="project" value="UniProtKB-UniRule"/>
</dbReference>
<dbReference type="GO" id="GO:0000256">
    <property type="term" value="P:allantoin catabolic process"/>
    <property type="evidence" value="ECO:0007669"/>
    <property type="project" value="UniProtKB-UniRule"/>
</dbReference>
<dbReference type="GO" id="GO:0006144">
    <property type="term" value="P:purine nucleobase metabolic process"/>
    <property type="evidence" value="ECO:0007669"/>
    <property type="project" value="UniProtKB-KW"/>
</dbReference>
<dbReference type="FunFam" id="2.60.120.260:FF:000059">
    <property type="entry name" value="Probable allantoicase"/>
    <property type="match status" value="1"/>
</dbReference>
<dbReference type="FunFam" id="2.60.120.260:FF:000090">
    <property type="entry name" value="Probable allantoicase"/>
    <property type="match status" value="1"/>
</dbReference>
<dbReference type="Gene3D" id="2.60.120.260">
    <property type="entry name" value="Galactose-binding domain-like"/>
    <property type="match status" value="2"/>
</dbReference>
<dbReference type="HAMAP" id="MF_00813">
    <property type="entry name" value="Allantoicase"/>
    <property type="match status" value="1"/>
</dbReference>
<dbReference type="InterPro" id="IPR005164">
    <property type="entry name" value="Allantoicase"/>
</dbReference>
<dbReference type="InterPro" id="IPR015908">
    <property type="entry name" value="Allantoicase_dom"/>
</dbReference>
<dbReference type="InterPro" id="IPR008979">
    <property type="entry name" value="Galactose-bd-like_sf"/>
</dbReference>
<dbReference type="NCBIfam" id="TIGR02961">
    <property type="entry name" value="allantoicase"/>
    <property type="match status" value="1"/>
</dbReference>
<dbReference type="PANTHER" id="PTHR12045">
    <property type="entry name" value="ALLANTOICASE"/>
    <property type="match status" value="1"/>
</dbReference>
<dbReference type="PANTHER" id="PTHR12045:SF3">
    <property type="entry name" value="INACTIVE ALLANTOICASE-RELATED"/>
    <property type="match status" value="1"/>
</dbReference>
<dbReference type="Pfam" id="PF03561">
    <property type="entry name" value="Allantoicase"/>
    <property type="match status" value="2"/>
</dbReference>
<dbReference type="PIRSF" id="PIRSF016516">
    <property type="entry name" value="Allantoicase"/>
    <property type="match status" value="1"/>
</dbReference>
<dbReference type="SUPFAM" id="SSF49785">
    <property type="entry name" value="Galactose-binding domain-like"/>
    <property type="match status" value="2"/>
</dbReference>
<reference key="1">
    <citation type="journal article" date="2009" name="Genome Biol.">
        <title>Genomic and genetic analyses of diversity and plant interactions of Pseudomonas fluorescens.</title>
        <authorList>
            <person name="Silby M.W."/>
            <person name="Cerdeno-Tarraga A.M."/>
            <person name="Vernikos G.S."/>
            <person name="Giddens S.R."/>
            <person name="Jackson R.W."/>
            <person name="Preston G.M."/>
            <person name="Zhang X.-X."/>
            <person name="Moon C.D."/>
            <person name="Gehrig S.M."/>
            <person name="Godfrey S.A.C."/>
            <person name="Knight C.G."/>
            <person name="Malone J.G."/>
            <person name="Robinson Z."/>
            <person name="Spiers A.J."/>
            <person name="Harris S."/>
            <person name="Challis G.L."/>
            <person name="Yaxley A.M."/>
            <person name="Harris D."/>
            <person name="Seeger K."/>
            <person name="Murphy L."/>
            <person name="Rutter S."/>
            <person name="Squares R."/>
            <person name="Quail M.A."/>
            <person name="Saunders E."/>
            <person name="Mavromatis K."/>
            <person name="Brettin T.S."/>
            <person name="Bentley S.D."/>
            <person name="Hothersall J."/>
            <person name="Stephens E."/>
            <person name="Thomas C.M."/>
            <person name="Parkhill J."/>
            <person name="Levy S.B."/>
            <person name="Rainey P.B."/>
            <person name="Thomson N.R."/>
        </authorList>
    </citation>
    <scope>NUCLEOTIDE SEQUENCE [LARGE SCALE GENOMIC DNA]</scope>
    <source>
        <strain>Pf0-1</strain>
    </source>
</reference>
<proteinExistence type="inferred from homology"/>
<comment type="catalytic activity">
    <reaction evidence="1">
        <text>allantoate + H2O = (S)-ureidoglycolate + urea</text>
        <dbReference type="Rhea" id="RHEA:11016"/>
        <dbReference type="ChEBI" id="CHEBI:15377"/>
        <dbReference type="ChEBI" id="CHEBI:16199"/>
        <dbReference type="ChEBI" id="CHEBI:17536"/>
        <dbReference type="ChEBI" id="CHEBI:57296"/>
        <dbReference type="EC" id="3.5.3.4"/>
    </reaction>
</comment>
<comment type="pathway">
    <text evidence="1">Nitrogen metabolism; (S)-allantoin degradation; (S)-ureidoglycolate from allantoate (aminidohydrolase route): step 1/1.</text>
</comment>
<comment type="similarity">
    <text evidence="1">Belongs to the allantoicase family.</text>
</comment>
<gene>
    <name evidence="1" type="primary">alc</name>
    <name type="ordered locus">Pfl01_1704</name>
</gene>
<keyword id="KW-0378">Hydrolase</keyword>
<keyword id="KW-0659">Purine metabolism</keyword>
<organism>
    <name type="scientific">Pseudomonas fluorescens (strain Pf0-1)</name>
    <dbReference type="NCBI Taxonomy" id="205922"/>
    <lineage>
        <taxon>Bacteria</taxon>
        <taxon>Pseudomonadati</taxon>
        <taxon>Pseudomonadota</taxon>
        <taxon>Gammaproteobacteria</taxon>
        <taxon>Pseudomonadales</taxon>
        <taxon>Pseudomonadaceae</taxon>
        <taxon>Pseudomonas</taxon>
    </lineage>
</organism>
<sequence length="331" mass="36735">MKAYAVPFEKFVNLADARLGTKIISVTDDWFADANRLFQPTPAVWKEGVFDDNGKWMDGWESRRKRFEGYDSAVIRLGVPGSIKGVDIDTSFFTGNFPPSASLEACFLASGEPDENTQWTEVLSAVELQGNSHHYHEISNDKAFSHLRFNIYPDGGVARLRVYGIPFRDWSAVGDNEQVDLAAALNGGRALACSDEHFGRMSNILNPGRGINMGDGWETARRRTPGNDWVIVALGHPGEIEKIIVDTLHFKGNYPDTCSIQGAFVKGGTDSQIETQSLFWRELLPSQKLEMHAEHTFVEQINALGPITHIRLNVFPDGGVSRLRVLGKVAK</sequence>
<evidence type="ECO:0000255" key="1">
    <source>
        <dbReference type="HAMAP-Rule" id="MF_00813"/>
    </source>
</evidence>
<name>ALLC_PSEPF</name>